<reference key="1">
    <citation type="journal article" date="2004" name="Nat. Biotechnol.">
        <title>The genome sequence of the extreme thermophile Thermus thermophilus.</title>
        <authorList>
            <person name="Henne A."/>
            <person name="Brueggemann H."/>
            <person name="Raasch C."/>
            <person name="Wiezer A."/>
            <person name="Hartsch T."/>
            <person name="Liesegang H."/>
            <person name="Johann A."/>
            <person name="Lienard T."/>
            <person name="Gohl O."/>
            <person name="Martinez-Arias R."/>
            <person name="Jacobi C."/>
            <person name="Starkuviene V."/>
            <person name="Schlenczeck S."/>
            <person name="Dencker S."/>
            <person name="Huber R."/>
            <person name="Klenk H.-P."/>
            <person name="Kramer W."/>
            <person name="Merkl R."/>
            <person name="Gottschalk G."/>
            <person name="Fritz H.-J."/>
        </authorList>
    </citation>
    <scope>NUCLEOTIDE SEQUENCE [LARGE SCALE GENOMIC DNA]</scope>
    <source>
        <strain>ATCC BAA-163 / DSM 7039 / HB27</strain>
    </source>
</reference>
<feature type="chain" id="PRO_0000237952" description="Shikimate kinase">
    <location>
        <begin position="1"/>
        <end position="184"/>
    </location>
</feature>
<feature type="binding site" evidence="1">
    <location>
        <begin position="20"/>
        <end position="25"/>
    </location>
    <ligand>
        <name>ATP</name>
        <dbReference type="ChEBI" id="CHEBI:30616"/>
    </ligand>
</feature>
<feature type="binding site" evidence="1">
    <location>
        <position position="24"/>
    </location>
    <ligand>
        <name>Mg(2+)</name>
        <dbReference type="ChEBI" id="CHEBI:18420"/>
    </ligand>
</feature>
<feature type="binding site" evidence="1">
    <location>
        <position position="42"/>
    </location>
    <ligand>
        <name>substrate</name>
    </ligand>
</feature>
<feature type="binding site" evidence="1">
    <location>
        <position position="66"/>
    </location>
    <ligand>
        <name>substrate</name>
    </ligand>
</feature>
<feature type="binding site" evidence="1">
    <location>
        <position position="88"/>
    </location>
    <ligand>
        <name>substrate</name>
    </ligand>
</feature>
<feature type="binding site" evidence="1">
    <location>
        <position position="127"/>
    </location>
    <ligand>
        <name>ATP</name>
        <dbReference type="ChEBI" id="CHEBI:30616"/>
    </ligand>
</feature>
<feature type="binding site" evidence="1">
    <location>
        <position position="146"/>
    </location>
    <ligand>
        <name>substrate</name>
    </ligand>
</feature>
<feature type="binding site" evidence="1">
    <location>
        <position position="162"/>
    </location>
    <ligand>
        <name>ATP</name>
        <dbReference type="ChEBI" id="CHEBI:30616"/>
    </ligand>
</feature>
<sequence length="184" mass="20958">MARLEVPRPATFVTLTGFMGVGKSRIGRELARALMLHFIDLDRYIERRTGISIPDIFRHLGEEAFRRMEKEAVRELVGKDYLVLSLGGGTFMDPESQKALLGRGPVVALWASPETILERAMRKPGERPLLQVENPLERIRTLLEARAPIYRKAHIHVSTDGRRVEEVVEEIVEKLWRHAEARGA</sequence>
<name>AROK_THET2</name>
<protein>
    <recommendedName>
        <fullName evidence="1">Shikimate kinase</fullName>
        <shortName evidence="1">SK</shortName>
        <ecNumber evidence="1">2.7.1.71</ecNumber>
    </recommendedName>
</protein>
<organism>
    <name type="scientific">Thermus thermophilus (strain ATCC BAA-163 / DSM 7039 / HB27)</name>
    <dbReference type="NCBI Taxonomy" id="262724"/>
    <lineage>
        <taxon>Bacteria</taxon>
        <taxon>Thermotogati</taxon>
        <taxon>Deinococcota</taxon>
        <taxon>Deinococci</taxon>
        <taxon>Thermales</taxon>
        <taxon>Thermaceae</taxon>
        <taxon>Thermus</taxon>
    </lineage>
</organism>
<proteinExistence type="inferred from homology"/>
<gene>
    <name evidence="1" type="primary">aroK</name>
    <name type="ordered locus">TT_C1019</name>
</gene>
<comment type="function">
    <text evidence="1">Catalyzes the specific phosphorylation of the 3-hydroxyl group of shikimic acid using ATP as a cosubstrate.</text>
</comment>
<comment type="catalytic activity">
    <reaction evidence="1">
        <text>shikimate + ATP = 3-phosphoshikimate + ADP + H(+)</text>
        <dbReference type="Rhea" id="RHEA:13121"/>
        <dbReference type="ChEBI" id="CHEBI:15378"/>
        <dbReference type="ChEBI" id="CHEBI:30616"/>
        <dbReference type="ChEBI" id="CHEBI:36208"/>
        <dbReference type="ChEBI" id="CHEBI:145989"/>
        <dbReference type="ChEBI" id="CHEBI:456216"/>
        <dbReference type="EC" id="2.7.1.71"/>
    </reaction>
</comment>
<comment type="cofactor">
    <cofactor evidence="1">
        <name>Mg(2+)</name>
        <dbReference type="ChEBI" id="CHEBI:18420"/>
    </cofactor>
    <text evidence="1">Binds 1 Mg(2+) ion per subunit.</text>
</comment>
<comment type="pathway">
    <text evidence="1">Metabolic intermediate biosynthesis; chorismate biosynthesis; chorismate from D-erythrose 4-phosphate and phosphoenolpyruvate: step 5/7.</text>
</comment>
<comment type="subunit">
    <text evidence="1">Monomer.</text>
</comment>
<comment type="subcellular location">
    <subcellularLocation>
        <location evidence="1">Cytoplasm</location>
    </subcellularLocation>
</comment>
<comment type="similarity">
    <text evidence="1">Belongs to the shikimate kinase family.</text>
</comment>
<evidence type="ECO:0000255" key="1">
    <source>
        <dbReference type="HAMAP-Rule" id="MF_00109"/>
    </source>
</evidence>
<keyword id="KW-0028">Amino-acid biosynthesis</keyword>
<keyword id="KW-0057">Aromatic amino acid biosynthesis</keyword>
<keyword id="KW-0067">ATP-binding</keyword>
<keyword id="KW-0963">Cytoplasm</keyword>
<keyword id="KW-0418">Kinase</keyword>
<keyword id="KW-0460">Magnesium</keyword>
<keyword id="KW-0479">Metal-binding</keyword>
<keyword id="KW-0547">Nucleotide-binding</keyword>
<keyword id="KW-0808">Transferase</keyword>
<dbReference type="EC" id="2.7.1.71" evidence="1"/>
<dbReference type="EMBL" id="AE017221">
    <property type="protein sequence ID" value="AAS81361.1"/>
    <property type="molecule type" value="Genomic_DNA"/>
</dbReference>
<dbReference type="RefSeq" id="WP_011173438.1">
    <property type="nucleotide sequence ID" value="NC_005835.1"/>
</dbReference>
<dbReference type="SMR" id="Q72IW2"/>
<dbReference type="KEGG" id="tth:TT_C1019"/>
<dbReference type="eggNOG" id="COG0703">
    <property type="taxonomic scope" value="Bacteria"/>
</dbReference>
<dbReference type="HOGENOM" id="CLU_057607_2_1_0"/>
<dbReference type="OrthoDB" id="9800332at2"/>
<dbReference type="UniPathway" id="UPA00053">
    <property type="reaction ID" value="UER00088"/>
</dbReference>
<dbReference type="Proteomes" id="UP000000592">
    <property type="component" value="Chromosome"/>
</dbReference>
<dbReference type="GO" id="GO:0005829">
    <property type="term" value="C:cytosol"/>
    <property type="evidence" value="ECO:0007669"/>
    <property type="project" value="TreeGrafter"/>
</dbReference>
<dbReference type="GO" id="GO:0005524">
    <property type="term" value="F:ATP binding"/>
    <property type="evidence" value="ECO:0007669"/>
    <property type="project" value="UniProtKB-UniRule"/>
</dbReference>
<dbReference type="GO" id="GO:0000287">
    <property type="term" value="F:magnesium ion binding"/>
    <property type="evidence" value="ECO:0007669"/>
    <property type="project" value="UniProtKB-UniRule"/>
</dbReference>
<dbReference type="GO" id="GO:0004765">
    <property type="term" value="F:shikimate kinase activity"/>
    <property type="evidence" value="ECO:0007669"/>
    <property type="project" value="UniProtKB-UniRule"/>
</dbReference>
<dbReference type="GO" id="GO:0008652">
    <property type="term" value="P:amino acid biosynthetic process"/>
    <property type="evidence" value="ECO:0007669"/>
    <property type="project" value="UniProtKB-KW"/>
</dbReference>
<dbReference type="GO" id="GO:0009073">
    <property type="term" value="P:aromatic amino acid family biosynthetic process"/>
    <property type="evidence" value="ECO:0007669"/>
    <property type="project" value="UniProtKB-KW"/>
</dbReference>
<dbReference type="GO" id="GO:0009423">
    <property type="term" value="P:chorismate biosynthetic process"/>
    <property type="evidence" value="ECO:0007669"/>
    <property type="project" value="UniProtKB-UniRule"/>
</dbReference>
<dbReference type="CDD" id="cd00464">
    <property type="entry name" value="SK"/>
    <property type="match status" value="1"/>
</dbReference>
<dbReference type="Gene3D" id="3.40.50.300">
    <property type="entry name" value="P-loop containing nucleotide triphosphate hydrolases"/>
    <property type="match status" value="1"/>
</dbReference>
<dbReference type="HAMAP" id="MF_00109">
    <property type="entry name" value="Shikimate_kinase"/>
    <property type="match status" value="1"/>
</dbReference>
<dbReference type="InterPro" id="IPR027417">
    <property type="entry name" value="P-loop_NTPase"/>
</dbReference>
<dbReference type="InterPro" id="IPR031322">
    <property type="entry name" value="Shikimate/glucono_kinase"/>
</dbReference>
<dbReference type="InterPro" id="IPR000623">
    <property type="entry name" value="Shikimate_kinase/TSH1"/>
</dbReference>
<dbReference type="InterPro" id="IPR023000">
    <property type="entry name" value="Shikimate_kinase_CS"/>
</dbReference>
<dbReference type="NCBIfam" id="NF010554">
    <property type="entry name" value="PRK13948.1"/>
    <property type="match status" value="1"/>
</dbReference>
<dbReference type="PANTHER" id="PTHR21087">
    <property type="entry name" value="SHIKIMATE KINASE"/>
    <property type="match status" value="1"/>
</dbReference>
<dbReference type="PANTHER" id="PTHR21087:SF16">
    <property type="entry name" value="SHIKIMATE KINASE 1, CHLOROPLASTIC"/>
    <property type="match status" value="1"/>
</dbReference>
<dbReference type="Pfam" id="PF01202">
    <property type="entry name" value="SKI"/>
    <property type="match status" value="1"/>
</dbReference>
<dbReference type="PRINTS" id="PR01100">
    <property type="entry name" value="SHIKIMTKNASE"/>
</dbReference>
<dbReference type="SUPFAM" id="SSF52540">
    <property type="entry name" value="P-loop containing nucleoside triphosphate hydrolases"/>
    <property type="match status" value="1"/>
</dbReference>
<dbReference type="PROSITE" id="PS01128">
    <property type="entry name" value="SHIKIMATE_KINASE"/>
    <property type="match status" value="1"/>
</dbReference>
<accession>Q72IW2</accession>